<comment type="function">
    <text evidence="1">IGPS catalyzes the conversion of PRFAR and glutamine to IGP, AICAR and glutamate. The HisF subunit catalyzes the cyclization activity that produces IGP and AICAR from PRFAR using the ammonia provided by the HisH subunit.</text>
</comment>
<comment type="catalytic activity">
    <reaction evidence="1">
        <text>5-[(5-phospho-1-deoxy-D-ribulos-1-ylimino)methylamino]-1-(5-phospho-beta-D-ribosyl)imidazole-4-carboxamide + L-glutamine = D-erythro-1-(imidazol-4-yl)glycerol 3-phosphate + 5-amino-1-(5-phospho-beta-D-ribosyl)imidazole-4-carboxamide + L-glutamate + H(+)</text>
        <dbReference type="Rhea" id="RHEA:24793"/>
        <dbReference type="ChEBI" id="CHEBI:15378"/>
        <dbReference type="ChEBI" id="CHEBI:29985"/>
        <dbReference type="ChEBI" id="CHEBI:58278"/>
        <dbReference type="ChEBI" id="CHEBI:58359"/>
        <dbReference type="ChEBI" id="CHEBI:58475"/>
        <dbReference type="ChEBI" id="CHEBI:58525"/>
        <dbReference type="EC" id="4.3.2.10"/>
    </reaction>
</comment>
<comment type="pathway">
    <text evidence="1">Amino-acid biosynthesis; L-histidine biosynthesis; L-histidine from 5-phospho-alpha-D-ribose 1-diphosphate: step 5/9.</text>
</comment>
<comment type="subunit">
    <text evidence="1">Heterodimer of HisH and HisF.</text>
</comment>
<comment type="subcellular location">
    <subcellularLocation>
        <location evidence="1">Cytoplasm</location>
    </subcellularLocation>
</comment>
<comment type="similarity">
    <text evidence="1">Belongs to the HisA/HisF family.</text>
</comment>
<comment type="sequence caution" evidence="2">
    <conflict type="erroneous initiation">
        <sequence resource="EMBL-CDS" id="ABN03920"/>
    </conflict>
</comment>
<name>HIS6_BURM9</name>
<evidence type="ECO:0000255" key="1">
    <source>
        <dbReference type="HAMAP-Rule" id="MF_01013"/>
    </source>
</evidence>
<evidence type="ECO:0000305" key="2"/>
<sequence>MALAKRIIPCFDVTAGRVVKGVNFVELRDAGDPVEIARRYDAQGADELTFLDITATSDGRDLILPIIEAVASQVFIPLTVGGGVRAVEDVRRLLNAGADKVSMNSSAVANPPLVRDAADKYGSQCIVVAIDAKRVSADGEPPRWEVFTHGGRKGTGLDAVEWARKMAELGAGEILLTSMDRDGTKAGFDLALTRAVSDAVPVPVIASGGVGSLEHLAAGITEGHADAVLAASIFHYGEHTVGEAKRFMAERGIAVRL</sequence>
<feature type="chain" id="PRO_0000319449" description="Imidazole glycerol phosphate synthase subunit HisF">
    <location>
        <begin position="1"/>
        <end position="257"/>
    </location>
</feature>
<feature type="active site" evidence="1">
    <location>
        <position position="12"/>
    </location>
</feature>
<feature type="active site" evidence="1">
    <location>
        <position position="131"/>
    </location>
</feature>
<reference key="1">
    <citation type="journal article" date="2010" name="Genome Biol. Evol.">
        <title>Continuing evolution of Burkholderia mallei through genome reduction and large-scale rearrangements.</title>
        <authorList>
            <person name="Losada L."/>
            <person name="Ronning C.M."/>
            <person name="DeShazer D."/>
            <person name="Woods D."/>
            <person name="Fedorova N."/>
            <person name="Kim H.S."/>
            <person name="Shabalina S.A."/>
            <person name="Pearson T.R."/>
            <person name="Brinkac L."/>
            <person name="Tan P."/>
            <person name="Nandi T."/>
            <person name="Crabtree J."/>
            <person name="Badger J."/>
            <person name="Beckstrom-Sternberg S."/>
            <person name="Saqib M."/>
            <person name="Schutzer S.E."/>
            <person name="Keim P."/>
            <person name="Nierman W.C."/>
        </authorList>
    </citation>
    <scope>NUCLEOTIDE SEQUENCE [LARGE SCALE GENOMIC DNA]</scope>
    <source>
        <strain>NCTC 10229</strain>
    </source>
</reference>
<gene>
    <name evidence="1" type="primary">hisF</name>
    <name type="ordered locus">BMA10229_A1794</name>
</gene>
<keyword id="KW-0028">Amino-acid biosynthesis</keyword>
<keyword id="KW-0963">Cytoplasm</keyword>
<keyword id="KW-0368">Histidine biosynthesis</keyword>
<keyword id="KW-0456">Lyase</keyword>
<accession>A2S754</accession>
<proteinExistence type="inferred from homology"/>
<protein>
    <recommendedName>
        <fullName evidence="1">Imidazole glycerol phosphate synthase subunit HisF</fullName>
        <ecNumber evidence="1">4.3.2.10</ecNumber>
    </recommendedName>
    <alternativeName>
        <fullName evidence="1">IGP synthase cyclase subunit</fullName>
    </alternativeName>
    <alternativeName>
        <fullName evidence="1">IGP synthase subunit HisF</fullName>
    </alternativeName>
    <alternativeName>
        <fullName evidence="1">ImGP synthase subunit HisF</fullName>
        <shortName evidence="1">IGPS subunit HisF</shortName>
    </alternativeName>
</protein>
<organism>
    <name type="scientific">Burkholderia mallei (strain NCTC 10229)</name>
    <dbReference type="NCBI Taxonomy" id="412022"/>
    <lineage>
        <taxon>Bacteria</taxon>
        <taxon>Pseudomonadati</taxon>
        <taxon>Pseudomonadota</taxon>
        <taxon>Betaproteobacteria</taxon>
        <taxon>Burkholderiales</taxon>
        <taxon>Burkholderiaceae</taxon>
        <taxon>Burkholderia</taxon>
        <taxon>pseudomallei group</taxon>
    </lineage>
</organism>
<dbReference type="EC" id="4.3.2.10" evidence="1"/>
<dbReference type="EMBL" id="CP000546">
    <property type="protein sequence ID" value="ABN03920.1"/>
    <property type="status" value="ALT_INIT"/>
    <property type="molecule type" value="Genomic_DNA"/>
</dbReference>
<dbReference type="RefSeq" id="WP_011204150.1">
    <property type="nucleotide sequence ID" value="NC_008836.1"/>
</dbReference>
<dbReference type="SMR" id="A2S754"/>
<dbReference type="GeneID" id="92980390"/>
<dbReference type="KEGG" id="bml:BMA10229_A1794"/>
<dbReference type="HOGENOM" id="CLU_048577_4_0_4"/>
<dbReference type="UniPathway" id="UPA00031">
    <property type="reaction ID" value="UER00010"/>
</dbReference>
<dbReference type="Proteomes" id="UP000002283">
    <property type="component" value="Chromosome I"/>
</dbReference>
<dbReference type="GO" id="GO:0005737">
    <property type="term" value="C:cytoplasm"/>
    <property type="evidence" value="ECO:0007669"/>
    <property type="project" value="UniProtKB-SubCell"/>
</dbReference>
<dbReference type="GO" id="GO:0000107">
    <property type="term" value="F:imidazoleglycerol-phosphate synthase activity"/>
    <property type="evidence" value="ECO:0007669"/>
    <property type="project" value="UniProtKB-UniRule"/>
</dbReference>
<dbReference type="GO" id="GO:0016829">
    <property type="term" value="F:lyase activity"/>
    <property type="evidence" value="ECO:0007669"/>
    <property type="project" value="UniProtKB-KW"/>
</dbReference>
<dbReference type="GO" id="GO:0000105">
    <property type="term" value="P:L-histidine biosynthetic process"/>
    <property type="evidence" value="ECO:0007669"/>
    <property type="project" value="UniProtKB-UniRule"/>
</dbReference>
<dbReference type="CDD" id="cd04731">
    <property type="entry name" value="HisF"/>
    <property type="match status" value="1"/>
</dbReference>
<dbReference type="FunFam" id="3.20.20.70:FF:000006">
    <property type="entry name" value="Imidazole glycerol phosphate synthase subunit HisF"/>
    <property type="match status" value="1"/>
</dbReference>
<dbReference type="Gene3D" id="3.20.20.70">
    <property type="entry name" value="Aldolase class I"/>
    <property type="match status" value="1"/>
</dbReference>
<dbReference type="HAMAP" id="MF_01013">
    <property type="entry name" value="HisF"/>
    <property type="match status" value="1"/>
</dbReference>
<dbReference type="InterPro" id="IPR013785">
    <property type="entry name" value="Aldolase_TIM"/>
</dbReference>
<dbReference type="InterPro" id="IPR006062">
    <property type="entry name" value="His_biosynth"/>
</dbReference>
<dbReference type="InterPro" id="IPR004651">
    <property type="entry name" value="HisF"/>
</dbReference>
<dbReference type="InterPro" id="IPR050064">
    <property type="entry name" value="IGPS_HisA/HisF"/>
</dbReference>
<dbReference type="InterPro" id="IPR011060">
    <property type="entry name" value="RibuloseP-bd_barrel"/>
</dbReference>
<dbReference type="NCBIfam" id="TIGR00735">
    <property type="entry name" value="hisF"/>
    <property type="match status" value="1"/>
</dbReference>
<dbReference type="PANTHER" id="PTHR21235:SF2">
    <property type="entry name" value="IMIDAZOLE GLYCEROL PHOSPHATE SYNTHASE HISHF"/>
    <property type="match status" value="1"/>
</dbReference>
<dbReference type="PANTHER" id="PTHR21235">
    <property type="entry name" value="IMIDAZOLE GLYCEROL PHOSPHATE SYNTHASE SUBUNIT HISF/H IGP SYNTHASE SUBUNIT HISF/H"/>
    <property type="match status" value="1"/>
</dbReference>
<dbReference type="Pfam" id="PF00977">
    <property type="entry name" value="His_biosynth"/>
    <property type="match status" value="1"/>
</dbReference>
<dbReference type="SUPFAM" id="SSF51366">
    <property type="entry name" value="Ribulose-phoshate binding barrel"/>
    <property type="match status" value="1"/>
</dbReference>